<keyword id="KW-0028">Amino-acid biosynthesis</keyword>
<keyword id="KW-0067">ATP-binding</keyword>
<keyword id="KW-0963">Cytoplasm</keyword>
<keyword id="KW-0328">Glycosyltransferase</keyword>
<keyword id="KW-0368">Histidine biosynthesis</keyword>
<keyword id="KW-0547">Nucleotide-binding</keyword>
<keyword id="KW-0808">Transferase</keyword>
<protein>
    <recommendedName>
        <fullName evidence="1">ATP phosphoribosyltransferase</fullName>
        <shortName evidence="1">ATP-PRT</shortName>
        <shortName evidence="1">ATP-PRTase</shortName>
        <ecNumber evidence="1">2.4.2.17</ecNumber>
    </recommendedName>
</protein>
<gene>
    <name evidence="1" type="primary">hisG</name>
    <name type="ordered locus">mma_3289</name>
</gene>
<organism>
    <name type="scientific">Janthinobacterium sp. (strain Marseille)</name>
    <name type="common">Minibacterium massiliensis</name>
    <dbReference type="NCBI Taxonomy" id="375286"/>
    <lineage>
        <taxon>Bacteria</taxon>
        <taxon>Pseudomonadati</taxon>
        <taxon>Pseudomonadota</taxon>
        <taxon>Betaproteobacteria</taxon>
        <taxon>Burkholderiales</taxon>
        <taxon>Oxalobacteraceae</taxon>
        <taxon>Janthinobacterium</taxon>
    </lineage>
</organism>
<proteinExistence type="inferred from homology"/>
<feature type="chain" id="PRO_0000319524" description="ATP phosphoribosyltransferase">
    <location>
        <begin position="1"/>
        <end position="220"/>
    </location>
</feature>
<reference key="1">
    <citation type="journal article" date="2007" name="PLoS Genet.">
        <title>Genome analysis of Minibacterium massiliensis highlights the convergent evolution of water-living bacteria.</title>
        <authorList>
            <person name="Audic S."/>
            <person name="Robert C."/>
            <person name="Campagna B."/>
            <person name="Parinello H."/>
            <person name="Claverie J.-M."/>
            <person name="Raoult D."/>
            <person name="Drancourt M."/>
        </authorList>
    </citation>
    <scope>NUCLEOTIDE SEQUENCE [LARGE SCALE GENOMIC DNA]</scope>
    <source>
        <strain>Marseille</strain>
    </source>
</reference>
<sequence length="220" mass="24103">MTQETQQLTLALSKGRIFEETLPLLEAAGIKVTEDPETSRKLILQTNDANVRVIIVRASDVPTYVQYGAADFGVAGKDVLLEHGGEGLYQPIDLNIANCRMSVAVKDGFDYESAVQQGARLRVVTKYVQTAREHFAAKGVHVDLIKLYGSMELGPLVGLADAIVDLVSTGSTLRANHLVEVERIMDISSRLVVNKAALKLKRERLQPILEAFEKASKRSS</sequence>
<evidence type="ECO:0000255" key="1">
    <source>
        <dbReference type="HAMAP-Rule" id="MF_01018"/>
    </source>
</evidence>
<name>HIS1_JANMA</name>
<comment type="function">
    <text evidence="1">Catalyzes the condensation of ATP and 5-phosphoribose 1-diphosphate to form N'-(5'-phosphoribosyl)-ATP (PR-ATP). Has a crucial role in the pathway because the rate of histidine biosynthesis seems to be controlled primarily by regulation of HisG enzymatic activity.</text>
</comment>
<comment type="catalytic activity">
    <reaction evidence="1">
        <text>1-(5-phospho-beta-D-ribosyl)-ATP + diphosphate = 5-phospho-alpha-D-ribose 1-diphosphate + ATP</text>
        <dbReference type="Rhea" id="RHEA:18473"/>
        <dbReference type="ChEBI" id="CHEBI:30616"/>
        <dbReference type="ChEBI" id="CHEBI:33019"/>
        <dbReference type="ChEBI" id="CHEBI:58017"/>
        <dbReference type="ChEBI" id="CHEBI:73183"/>
        <dbReference type="EC" id="2.4.2.17"/>
    </reaction>
</comment>
<comment type="pathway">
    <text evidence="1">Amino-acid biosynthesis; L-histidine biosynthesis; L-histidine from 5-phospho-alpha-D-ribose 1-diphosphate: step 1/9.</text>
</comment>
<comment type="subunit">
    <text evidence="1">Heteromultimer composed of HisG and HisZ subunits.</text>
</comment>
<comment type="subcellular location">
    <subcellularLocation>
        <location evidence="1">Cytoplasm</location>
    </subcellularLocation>
</comment>
<comment type="domain">
    <text>Lacks the C-terminal regulatory region which is replaced by HisZ.</text>
</comment>
<comment type="similarity">
    <text evidence="1">Belongs to the ATP phosphoribosyltransferase family. Short subfamily.</text>
</comment>
<accession>A6T382</accession>
<dbReference type="EC" id="2.4.2.17" evidence="1"/>
<dbReference type="EMBL" id="CP000269">
    <property type="protein sequence ID" value="ABR88851.1"/>
    <property type="molecule type" value="Genomic_DNA"/>
</dbReference>
<dbReference type="RefSeq" id="WP_012081132.1">
    <property type="nucleotide sequence ID" value="NC_009659.1"/>
</dbReference>
<dbReference type="SMR" id="A6T382"/>
<dbReference type="STRING" id="375286.mma_3289"/>
<dbReference type="KEGG" id="mms:mma_3289"/>
<dbReference type="eggNOG" id="COG0040">
    <property type="taxonomic scope" value="Bacteria"/>
</dbReference>
<dbReference type="HOGENOM" id="CLU_038115_2_0_4"/>
<dbReference type="OrthoDB" id="9801867at2"/>
<dbReference type="UniPathway" id="UPA00031">
    <property type="reaction ID" value="UER00006"/>
</dbReference>
<dbReference type="Proteomes" id="UP000006388">
    <property type="component" value="Chromosome"/>
</dbReference>
<dbReference type="GO" id="GO:0005737">
    <property type="term" value="C:cytoplasm"/>
    <property type="evidence" value="ECO:0007669"/>
    <property type="project" value="UniProtKB-SubCell"/>
</dbReference>
<dbReference type="GO" id="GO:0005524">
    <property type="term" value="F:ATP binding"/>
    <property type="evidence" value="ECO:0007669"/>
    <property type="project" value="UniProtKB-KW"/>
</dbReference>
<dbReference type="GO" id="GO:0003879">
    <property type="term" value="F:ATP phosphoribosyltransferase activity"/>
    <property type="evidence" value="ECO:0007669"/>
    <property type="project" value="UniProtKB-UniRule"/>
</dbReference>
<dbReference type="GO" id="GO:0000105">
    <property type="term" value="P:L-histidine biosynthetic process"/>
    <property type="evidence" value="ECO:0007669"/>
    <property type="project" value="UniProtKB-UniRule"/>
</dbReference>
<dbReference type="CDD" id="cd13595">
    <property type="entry name" value="PBP2_HisGs"/>
    <property type="match status" value="1"/>
</dbReference>
<dbReference type="FunFam" id="3.40.190.10:FF:000011">
    <property type="entry name" value="ATP phosphoribosyltransferase"/>
    <property type="match status" value="1"/>
</dbReference>
<dbReference type="Gene3D" id="3.40.190.10">
    <property type="entry name" value="Periplasmic binding protein-like II"/>
    <property type="match status" value="2"/>
</dbReference>
<dbReference type="HAMAP" id="MF_01018">
    <property type="entry name" value="HisG_Short"/>
    <property type="match status" value="1"/>
</dbReference>
<dbReference type="InterPro" id="IPR013820">
    <property type="entry name" value="ATP_PRibTrfase_cat"/>
</dbReference>
<dbReference type="InterPro" id="IPR018198">
    <property type="entry name" value="ATP_PRibTrfase_CS"/>
</dbReference>
<dbReference type="InterPro" id="IPR001348">
    <property type="entry name" value="ATP_PRibTrfase_HisG"/>
</dbReference>
<dbReference type="InterPro" id="IPR024893">
    <property type="entry name" value="ATP_PRibTrfase_HisG_short"/>
</dbReference>
<dbReference type="NCBIfam" id="TIGR00070">
    <property type="entry name" value="hisG"/>
    <property type="match status" value="1"/>
</dbReference>
<dbReference type="PANTHER" id="PTHR21403:SF8">
    <property type="entry name" value="ATP PHOSPHORIBOSYLTRANSFERASE"/>
    <property type="match status" value="1"/>
</dbReference>
<dbReference type="PANTHER" id="PTHR21403">
    <property type="entry name" value="ATP PHOSPHORIBOSYLTRANSFERASE ATP-PRTASE"/>
    <property type="match status" value="1"/>
</dbReference>
<dbReference type="Pfam" id="PF01634">
    <property type="entry name" value="HisG"/>
    <property type="match status" value="1"/>
</dbReference>
<dbReference type="SUPFAM" id="SSF53850">
    <property type="entry name" value="Periplasmic binding protein-like II"/>
    <property type="match status" value="1"/>
</dbReference>
<dbReference type="PROSITE" id="PS01316">
    <property type="entry name" value="ATP_P_PHORIBOSYLTR"/>
    <property type="match status" value="1"/>
</dbReference>